<comment type="function">
    <text evidence="1 4">Plays a major role in the shutoff of the host protein expression by cleaving mRNAs probably via an endonuclease activity. This host shutoff allows the virus to escape from the host antiviral response (By similarity). Hijacks host RNA splicing machinery to selectively target host RNAs containing introns for destruction. This may explain the preferential degradation of RNAs that have undergone co- or post-transcriptional processing (By similarity).</text>
</comment>
<comment type="subcellular location">
    <subcellularLocation>
        <location evidence="4">Host cytoplasm</location>
    </subcellularLocation>
    <subcellularLocation>
        <location evidence="4">Host nucleus</location>
    </subcellularLocation>
</comment>
<comment type="alternative products">
    <event type="ribosomal frameshifting"/>
    <isoform>
        <id>P0DJT3-1</id>
        <name>PA-X</name>
        <sequence type="displayed"/>
    </isoform>
    <isoform>
        <id>Q2VNC6-1</id>
        <name>PA</name>
        <sequence type="external"/>
    </isoform>
</comment>
<comment type="domain">
    <text evidence="1 4">The probable endonuclease active site in the N-terminus and the basic amino acid cluster in the C-terminus are important for the shutoff activity. The C-terminus acts as a nuclear localization signal (By similarity). The C-terminus is recruited to host protein complexes involved in nuclear Pol II RNA processing (By similarity).</text>
</comment>
<comment type="similarity">
    <text evidence="6">Belongs to the influenza viruses PA-X family.</text>
</comment>
<proteinExistence type="inferred from homology"/>
<name>PAX_I78A8</name>
<sequence length="252" mass="29391">MEDFVRQCFNPMIVELAEKAMKEYGEDLKIETNKFAAICTHLEVCFMYSDFHFINEQGESIVVELDDPNALLKHRFEIIEGRDRTMAWTVVNSICNTTGAEKPKFLPDLYDYKENRFIEIGVTRREVHIYYLEKANKIKSENTHIHIFSFTGEEMATKADYTLDEESRARIKTRLFTIRQEMANRGLWDSFVSPKEAKKQLKKDLKSQELCAGLPTKVSRRTSPALRILEPMWMDSNRTAALRASFLKCPKK</sequence>
<evidence type="ECO:0000250" key="1">
    <source>
        <dbReference type="UniProtKB" id="P0CK64"/>
    </source>
</evidence>
<evidence type="ECO:0000250" key="2">
    <source>
        <dbReference type="UniProtKB" id="P0CK68"/>
    </source>
</evidence>
<evidence type="ECO:0000250" key="3">
    <source>
        <dbReference type="UniProtKB" id="P0DJW8"/>
    </source>
</evidence>
<evidence type="ECO:0000250" key="4">
    <source>
        <dbReference type="UniProtKB" id="P0DXO5"/>
    </source>
</evidence>
<evidence type="ECO:0000250" key="5">
    <source>
        <dbReference type="UniProtKB" id="P0DXO6"/>
    </source>
</evidence>
<evidence type="ECO:0000305" key="6"/>
<feature type="chain" id="PRO_0000419396" description="Protein PA-X">
    <location>
        <begin position="1"/>
        <end position="252"/>
    </location>
</feature>
<feature type="active site" evidence="2">
    <location>
        <position position="80"/>
    </location>
</feature>
<feature type="active site" evidence="2">
    <location>
        <position position="108"/>
    </location>
</feature>
<feature type="site" description="Important for efficient shutoff activity" evidence="5">
    <location>
        <position position="28"/>
    </location>
</feature>
<feature type="site" description="Important for efficient shutoff activity" evidence="5">
    <location>
        <position position="65"/>
    </location>
</feature>
<feature type="site" description="Important for efficient shutoff activity and nuclear localization" evidence="4">
    <location>
        <position position="195"/>
    </location>
</feature>
<feature type="site" description="Important for efficient shutoff activity and nuclear localization" evidence="4">
    <location>
        <position position="198"/>
    </location>
</feature>
<feature type="site" description="Important for efficient shutoff activity and nuclear localization" evidence="4">
    <location>
        <position position="199"/>
    </location>
</feature>
<feature type="site" description="Important for efficient shutoff activity" evidence="3">
    <location>
        <position position="202"/>
    </location>
</feature>
<feature type="site" description="Important for efficient shutoff activity" evidence="3">
    <location>
        <position position="203"/>
    </location>
</feature>
<feature type="site" description="Important for efficient shutoff activity" evidence="3">
    <location>
        <position position="206"/>
    </location>
</feature>
<keyword id="KW-1132">Decay of host mRNAs by virus</keyword>
<keyword id="KW-1262">Eukaryotic host gene expression shutoff by virus</keyword>
<keyword id="KW-1035">Host cytoplasm</keyword>
<keyword id="KW-1190">Host gene expression shutoff by virus</keyword>
<keyword id="KW-1192">Host mRNA suppression by virus</keyword>
<keyword id="KW-1048">Host nucleus</keyword>
<keyword id="KW-0945">Host-virus interaction</keyword>
<keyword id="KW-0688">Ribosomal frameshifting</keyword>
<accession>P0DJT3</accession>
<gene>
    <name type="primary">PA</name>
</gene>
<protein>
    <recommendedName>
        <fullName>Protein PA-X</fullName>
    </recommendedName>
</protein>
<organismHost>
    <name type="scientific">Aves</name>
    <dbReference type="NCBI Taxonomy" id="8782"/>
</organismHost>
<organismHost>
    <name type="scientific">Cetacea</name>
    <name type="common">whales</name>
    <dbReference type="NCBI Taxonomy" id="9721"/>
</organismHost>
<organismHost>
    <name type="scientific">Homo sapiens</name>
    <name type="common">Human</name>
    <dbReference type="NCBI Taxonomy" id="9606"/>
</organismHost>
<organismHost>
    <name type="scientific">Phocidae</name>
    <name type="common">true seals</name>
    <dbReference type="NCBI Taxonomy" id="9709"/>
</organismHost>
<organismHost>
    <name type="scientific">Sus scrofa</name>
    <name type="common">Pig</name>
    <dbReference type="NCBI Taxonomy" id="9823"/>
</organismHost>
<organism>
    <name type="scientific">Influenza A virus (strain A/Memphis/18/1978 H3N2)</name>
    <dbReference type="NCBI Taxonomy" id="383579"/>
    <lineage>
        <taxon>Viruses</taxon>
        <taxon>Riboviria</taxon>
        <taxon>Orthornavirae</taxon>
        <taxon>Negarnaviricota</taxon>
        <taxon>Polyploviricotina</taxon>
        <taxon>Insthoviricetes</taxon>
        <taxon>Articulavirales</taxon>
        <taxon>Orthomyxoviridae</taxon>
        <taxon>Alphainfluenzavirus</taxon>
        <taxon>Alphainfluenzavirus influenzae</taxon>
        <taxon>Influenza A virus</taxon>
    </lineage>
</organism>
<dbReference type="EMBL" id="CY006712">
    <property type="status" value="NOT_ANNOTATED_CDS"/>
    <property type="molecule type" value="Genomic_RNA"/>
</dbReference>
<dbReference type="SMR" id="P0DJT3"/>
<dbReference type="Proteomes" id="UP000008574">
    <property type="component" value="Genome"/>
</dbReference>
<dbReference type="GO" id="GO:0003723">
    <property type="term" value="F:RNA binding"/>
    <property type="evidence" value="ECO:0007669"/>
    <property type="project" value="InterPro"/>
</dbReference>
<dbReference type="GO" id="GO:0039694">
    <property type="term" value="P:viral RNA genome replication"/>
    <property type="evidence" value="ECO:0007669"/>
    <property type="project" value="InterPro"/>
</dbReference>
<dbReference type="GO" id="GO:0075523">
    <property type="term" value="P:viral translational frameshifting"/>
    <property type="evidence" value="ECO:0007669"/>
    <property type="project" value="UniProtKB-KW"/>
</dbReference>
<dbReference type="FunFam" id="3.40.91.90:FF:000001">
    <property type="entry name" value="Polymerase acidic protein"/>
    <property type="match status" value="1"/>
</dbReference>
<dbReference type="Gene3D" id="3.40.91.90">
    <property type="entry name" value="Influenza RNA-dependent RNA polymerase subunit PA, endonuclease domain"/>
    <property type="match status" value="1"/>
</dbReference>
<dbReference type="InterPro" id="IPR001009">
    <property type="entry name" value="PA/PA-X"/>
</dbReference>
<dbReference type="InterPro" id="IPR038372">
    <property type="entry name" value="PA/PA-X_sf"/>
</dbReference>
<dbReference type="Pfam" id="PF00603">
    <property type="entry name" value="Flu_PA"/>
    <property type="match status" value="1"/>
</dbReference>
<reference key="1">
    <citation type="submission" date="2005-12" db="EMBL/GenBank/DDBJ databases">
        <title>The NIAID influenza genome sequencing project.</title>
        <authorList>
            <person name="Ghedin E."/>
            <person name="Spiro D."/>
            <person name="Miller N."/>
            <person name="Zaborsky J."/>
            <person name="Feldblyum T."/>
            <person name="Subbu V."/>
            <person name="Shumway M."/>
            <person name="Sparenborg J."/>
            <person name="Groveman L."/>
            <person name="Halpin R."/>
            <person name="Sitz J."/>
            <person name="Koo H."/>
            <person name="Salzberg S.L."/>
            <person name="Webster R.G."/>
            <person name="Hoffmann E."/>
            <person name="Krauss S."/>
            <person name="Naeve C."/>
            <person name="Bao Y."/>
            <person name="Bolotov P."/>
            <person name="Dernovoy D."/>
            <person name="Kiryutin B."/>
            <person name="Lipman D.J."/>
            <person name="Tatusova T."/>
        </authorList>
    </citation>
    <scope>NUCLEOTIDE SEQUENCE [GENOMIC RNA]</scope>
</reference>